<proteinExistence type="inferred from homology"/>
<evidence type="ECO:0000255" key="1">
    <source>
        <dbReference type="HAMAP-Rule" id="MF_01337"/>
    </source>
</evidence>
<evidence type="ECO:0000305" key="2"/>
<dbReference type="EMBL" id="CP001217">
    <property type="protein sequence ID" value="ACJ08420.1"/>
    <property type="molecule type" value="Genomic_DNA"/>
</dbReference>
<dbReference type="SMR" id="B6JNE2"/>
<dbReference type="KEGG" id="hpp:HPP12_1268"/>
<dbReference type="HOGENOM" id="CLU_098841_0_1_7"/>
<dbReference type="Proteomes" id="UP000008198">
    <property type="component" value="Chromosome"/>
</dbReference>
<dbReference type="GO" id="GO:0022625">
    <property type="term" value="C:cytosolic large ribosomal subunit"/>
    <property type="evidence" value="ECO:0007669"/>
    <property type="project" value="TreeGrafter"/>
</dbReference>
<dbReference type="GO" id="GO:0008097">
    <property type="term" value="F:5S rRNA binding"/>
    <property type="evidence" value="ECO:0007669"/>
    <property type="project" value="TreeGrafter"/>
</dbReference>
<dbReference type="GO" id="GO:0003735">
    <property type="term" value="F:structural constituent of ribosome"/>
    <property type="evidence" value="ECO:0007669"/>
    <property type="project" value="InterPro"/>
</dbReference>
<dbReference type="GO" id="GO:0006412">
    <property type="term" value="P:translation"/>
    <property type="evidence" value="ECO:0007669"/>
    <property type="project" value="UniProtKB-UniRule"/>
</dbReference>
<dbReference type="CDD" id="cd00432">
    <property type="entry name" value="Ribosomal_L18_L5e"/>
    <property type="match status" value="1"/>
</dbReference>
<dbReference type="Gene3D" id="3.30.420.100">
    <property type="match status" value="1"/>
</dbReference>
<dbReference type="HAMAP" id="MF_01337_B">
    <property type="entry name" value="Ribosomal_uL18_B"/>
    <property type="match status" value="1"/>
</dbReference>
<dbReference type="InterPro" id="IPR004389">
    <property type="entry name" value="Ribosomal_uL18_bac-type"/>
</dbReference>
<dbReference type="InterPro" id="IPR005484">
    <property type="entry name" value="Ribosomal_uL18_bac/euk"/>
</dbReference>
<dbReference type="NCBIfam" id="TIGR00060">
    <property type="entry name" value="L18_bact"/>
    <property type="match status" value="1"/>
</dbReference>
<dbReference type="PANTHER" id="PTHR12899">
    <property type="entry name" value="39S RIBOSOMAL PROTEIN L18, MITOCHONDRIAL"/>
    <property type="match status" value="1"/>
</dbReference>
<dbReference type="PANTHER" id="PTHR12899:SF3">
    <property type="entry name" value="LARGE RIBOSOMAL SUBUNIT PROTEIN UL18M"/>
    <property type="match status" value="1"/>
</dbReference>
<dbReference type="Pfam" id="PF00861">
    <property type="entry name" value="Ribosomal_L18p"/>
    <property type="match status" value="1"/>
</dbReference>
<dbReference type="SUPFAM" id="SSF53137">
    <property type="entry name" value="Translational machinery components"/>
    <property type="match status" value="1"/>
</dbReference>
<gene>
    <name evidence="1" type="primary">rplR</name>
    <name type="ordered locus">HPP12_1268</name>
</gene>
<organism>
    <name type="scientific">Helicobacter pylori (strain P12)</name>
    <dbReference type="NCBI Taxonomy" id="570508"/>
    <lineage>
        <taxon>Bacteria</taxon>
        <taxon>Pseudomonadati</taxon>
        <taxon>Campylobacterota</taxon>
        <taxon>Epsilonproteobacteria</taxon>
        <taxon>Campylobacterales</taxon>
        <taxon>Helicobacteraceae</taxon>
        <taxon>Helicobacter</taxon>
    </lineage>
</organism>
<feature type="chain" id="PRO_1000142674" description="Large ribosomal subunit protein uL18">
    <location>
        <begin position="1"/>
        <end position="118"/>
    </location>
</feature>
<sequence length="118" mass="13464">MNAKALYKKKALRDRRKLRIKSKLLGDALRPRVSVFRSNRYFYAQAIDDVKQSTITHIDGRKMGFKNTQEDAKKLGALFAEELKKAGIERAVYDRNGYLYHGVVAAFAESLRENGIAL</sequence>
<accession>B6JNE2</accession>
<keyword id="KW-0687">Ribonucleoprotein</keyword>
<keyword id="KW-0689">Ribosomal protein</keyword>
<keyword id="KW-0694">RNA-binding</keyword>
<keyword id="KW-0699">rRNA-binding</keyword>
<reference key="1">
    <citation type="submission" date="2008-10" db="EMBL/GenBank/DDBJ databases">
        <title>The complete genome sequence of Helicobacter pylori strain P12.</title>
        <authorList>
            <person name="Fischer W."/>
            <person name="Windhager L."/>
            <person name="Karnholz A."/>
            <person name="Zeiller M."/>
            <person name="Zimmer R."/>
            <person name="Haas R."/>
        </authorList>
    </citation>
    <scope>NUCLEOTIDE SEQUENCE [LARGE SCALE GENOMIC DNA]</scope>
    <source>
        <strain>P12</strain>
    </source>
</reference>
<comment type="function">
    <text evidence="1">This is one of the proteins that bind and probably mediate the attachment of the 5S RNA into the large ribosomal subunit, where it forms part of the central protuberance.</text>
</comment>
<comment type="subunit">
    <text evidence="1">Part of the 50S ribosomal subunit; part of the 5S rRNA/L5/L18/L25 subcomplex. Contacts the 5S and 23S rRNAs.</text>
</comment>
<comment type="similarity">
    <text evidence="1">Belongs to the universal ribosomal protein uL18 family.</text>
</comment>
<name>RL18_HELP2</name>
<protein>
    <recommendedName>
        <fullName evidence="1">Large ribosomal subunit protein uL18</fullName>
    </recommendedName>
    <alternativeName>
        <fullName evidence="2">50S ribosomal protein L18</fullName>
    </alternativeName>
</protein>